<gene>
    <name evidence="1" type="primary">clpX</name>
    <name type="ordered locus">Cpha266_0631</name>
</gene>
<dbReference type="EMBL" id="CP000492">
    <property type="protein sequence ID" value="ABL64686.1"/>
    <property type="molecule type" value="Genomic_DNA"/>
</dbReference>
<dbReference type="RefSeq" id="WP_011744519.1">
    <property type="nucleotide sequence ID" value="NC_008639.1"/>
</dbReference>
<dbReference type="SMR" id="A1BE59"/>
<dbReference type="STRING" id="290317.Cpha266_0631"/>
<dbReference type="KEGG" id="cph:Cpha266_0631"/>
<dbReference type="eggNOG" id="COG1219">
    <property type="taxonomic scope" value="Bacteria"/>
</dbReference>
<dbReference type="HOGENOM" id="CLU_014218_8_2_10"/>
<dbReference type="OrthoDB" id="9804062at2"/>
<dbReference type="Proteomes" id="UP000008701">
    <property type="component" value="Chromosome"/>
</dbReference>
<dbReference type="GO" id="GO:0009376">
    <property type="term" value="C:HslUV protease complex"/>
    <property type="evidence" value="ECO:0007669"/>
    <property type="project" value="TreeGrafter"/>
</dbReference>
<dbReference type="GO" id="GO:0005524">
    <property type="term" value="F:ATP binding"/>
    <property type="evidence" value="ECO:0007669"/>
    <property type="project" value="UniProtKB-UniRule"/>
</dbReference>
<dbReference type="GO" id="GO:0016887">
    <property type="term" value="F:ATP hydrolysis activity"/>
    <property type="evidence" value="ECO:0007669"/>
    <property type="project" value="InterPro"/>
</dbReference>
<dbReference type="GO" id="GO:0140662">
    <property type="term" value="F:ATP-dependent protein folding chaperone"/>
    <property type="evidence" value="ECO:0007669"/>
    <property type="project" value="InterPro"/>
</dbReference>
<dbReference type="GO" id="GO:0046983">
    <property type="term" value="F:protein dimerization activity"/>
    <property type="evidence" value="ECO:0007669"/>
    <property type="project" value="InterPro"/>
</dbReference>
<dbReference type="GO" id="GO:0051082">
    <property type="term" value="F:unfolded protein binding"/>
    <property type="evidence" value="ECO:0007669"/>
    <property type="project" value="UniProtKB-UniRule"/>
</dbReference>
<dbReference type="GO" id="GO:0008270">
    <property type="term" value="F:zinc ion binding"/>
    <property type="evidence" value="ECO:0007669"/>
    <property type="project" value="InterPro"/>
</dbReference>
<dbReference type="GO" id="GO:0051301">
    <property type="term" value="P:cell division"/>
    <property type="evidence" value="ECO:0007669"/>
    <property type="project" value="TreeGrafter"/>
</dbReference>
<dbReference type="GO" id="GO:0051603">
    <property type="term" value="P:proteolysis involved in protein catabolic process"/>
    <property type="evidence" value="ECO:0007669"/>
    <property type="project" value="TreeGrafter"/>
</dbReference>
<dbReference type="CDD" id="cd19497">
    <property type="entry name" value="RecA-like_ClpX"/>
    <property type="match status" value="1"/>
</dbReference>
<dbReference type="FunFam" id="1.10.8.60:FF:000002">
    <property type="entry name" value="ATP-dependent Clp protease ATP-binding subunit ClpX"/>
    <property type="match status" value="1"/>
</dbReference>
<dbReference type="Gene3D" id="1.10.8.60">
    <property type="match status" value="1"/>
</dbReference>
<dbReference type="Gene3D" id="6.20.220.10">
    <property type="entry name" value="ClpX chaperone, C4-type zinc finger domain"/>
    <property type="match status" value="1"/>
</dbReference>
<dbReference type="Gene3D" id="3.40.50.300">
    <property type="entry name" value="P-loop containing nucleotide triphosphate hydrolases"/>
    <property type="match status" value="1"/>
</dbReference>
<dbReference type="HAMAP" id="MF_00175">
    <property type="entry name" value="ClpX"/>
    <property type="match status" value="1"/>
</dbReference>
<dbReference type="InterPro" id="IPR003593">
    <property type="entry name" value="AAA+_ATPase"/>
</dbReference>
<dbReference type="InterPro" id="IPR050052">
    <property type="entry name" value="ATP-dep_Clp_protease_ClpX"/>
</dbReference>
<dbReference type="InterPro" id="IPR003959">
    <property type="entry name" value="ATPase_AAA_core"/>
</dbReference>
<dbReference type="InterPro" id="IPR019489">
    <property type="entry name" value="Clp_ATPase_C"/>
</dbReference>
<dbReference type="InterPro" id="IPR004487">
    <property type="entry name" value="Clp_protease_ATP-bd_su_ClpX"/>
</dbReference>
<dbReference type="InterPro" id="IPR046425">
    <property type="entry name" value="ClpX_bact"/>
</dbReference>
<dbReference type="InterPro" id="IPR027417">
    <property type="entry name" value="P-loop_NTPase"/>
</dbReference>
<dbReference type="InterPro" id="IPR010603">
    <property type="entry name" value="Znf_CppX_C4"/>
</dbReference>
<dbReference type="InterPro" id="IPR038366">
    <property type="entry name" value="Znf_CppX_C4_sf"/>
</dbReference>
<dbReference type="NCBIfam" id="TIGR00382">
    <property type="entry name" value="clpX"/>
    <property type="match status" value="1"/>
</dbReference>
<dbReference type="NCBIfam" id="NF003745">
    <property type="entry name" value="PRK05342.1"/>
    <property type="match status" value="1"/>
</dbReference>
<dbReference type="PANTHER" id="PTHR48102:SF7">
    <property type="entry name" value="ATP-DEPENDENT CLP PROTEASE ATP-BINDING SUBUNIT CLPX-LIKE, MITOCHONDRIAL"/>
    <property type="match status" value="1"/>
</dbReference>
<dbReference type="PANTHER" id="PTHR48102">
    <property type="entry name" value="ATP-DEPENDENT CLP PROTEASE ATP-BINDING SUBUNIT CLPX-LIKE, MITOCHONDRIAL-RELATED"/>
    <property type="match status" value="1"/>
</dbReference>
<dbReference type="Pfam" id="PF07724">
    <property type="entry name" value="AAA_2"/>
    <property type="match status" value="1"/>
</dbReference>
<dbReference type="Pfam" id="PF10431">
    <property type="entry name" value="ClpB_D2-small"/>
    <property type="match status" value="1"/>
</dbReference>
<dbReference type="Pfam" id="PF06689">
    <property type="entry name" value="zf-C4_ClpX"/>
    <property type="match status" value="1"/>
</dbReference>
<dbReference type="SMART" id="SM00382">
    <property type="entry name" value="AAA"/>
    <property type="match status" value="1"/>
</dbReference>
<dbReference type="SMART" id="SM01086">
    <property type="entry name" value="ClpB_D2-small"/>
    <property type="match status" value="1"/>
</dbReference>
<dbReference type="SMART" id="SM00994">
    <property type="entry name" value="zf-C4_ClpX"/>
    <property type="match status" value="1"/>
</dbReference>
<dbReference type="SUPFAM" id="SSF57716">
    <property type="entry name" value="Glucocorticoid receptor-like (DNA-binding domain)"/>
    <property type="match status" value="1"/>
</dbReference>
<dbReference type="SUPFAM" id="SSF52540">
    <property type="entry name" value="P-loop containing nucleoside triphosphate hydrolases"/>
    <property type="match status" value="1"/>
</dbReference>
<dbReference type="PROSITE" id="PS51902">
    <property type="entry name" value="CLPX_ZB"/>
    <property type="match status" value="1"/>
</dbReference>
<keyword id="KW-0067">ATP-binding</keyword>
<keyword id="KW-0143">Chaperone</keyword>
<keyword id="KW-0479">Metal-binding</keyword>
<keyword id="KW-0547">Nucleotide-binding</keyword>
<keyword id="KW-1185">Reference proteome</keyword>
<keyword id="KW-0862">Zinc</keyword>
<evidence type="ECO:0000255" key="1">
    <source>
        <dbReference type="HAMAP-Rule" id="MF_00175"/>
    </source>
</evidence>
<evidence type="ECO:0000255" key="2">
    <source>
        <dbReference type="PROSITE-ProRule" id="PRU01250"/>
    </source>
</evidence>
<protein>
    <recommendedName>
        <fullName evidence="1">ATP-dependent Clp protease ATP-binding subunit ClpX</fullName>
    </recommendedName>
</protein>
<sequence>MTKEPVKGKGKTGNGNEQVLCSFCGRTTHEVNSMVAGPNAFICDRCIKTSYEILRKEISAINPSAKRAQESTFQTRLISPKAIMESLGQYVVGQEIAKKSLAVAVYNHYKRIDSQEWAHDSDEVVIEKSNILLIGPTGTGKTLLAQTLANLLDVPFTIADATSLTEAGYVGDDVETILARLLYASDFNLERTERGIIYVDEIDKIARKSANVSITRDVSGEGVQQALLKILEGSVVGVPPKGGRKHPEQQLININTRNILFICGGAFEGLDKLIARRVSKSSMGFGSKVKNKHTGYDPEILRFVTQDDLHEYGLIPEFIGRLPVISTLDPLDETALRSILVEPKNAIIKQYKKLFEMDGVELEFTDEALDKVVDIAIDRGTGARALRSVLESVMIDIMFELPTLKGVKKCVITADTIENRSEPEFYSGDGKKKKIA</sequence>
<accession>A1BE59</accession>
<proteinExistence type="inferred from homology"/>
<feature type="chain" id="PRO_1000024540" description="ATP-dependent Clp protease ATP-binding subunit ClpX">
    <location>
        <begin position="1"/>
        <end position="436"/>
    </location>
</feature>
<feature type="domain" description="ClpX-type ZB" evidence="2">
    <location>
        <begin position="9"/>
        <end position="62"/>
    </location>
</feature>
<feature type="binding site" evidence="2">
    <location>
        <position position="21"/>
    </location>
    <ligand>
        <name>Zn(2+)</name>
        <dbReference type="ChEBI" id="CHEBI:29105"/>
    </ligand>
</feature>
<feature type="binding site" evidence="2">
    <location>
        <position position="24"/>
    </location>
    <ligand>
        <name>Zn(2+)</name>
        <dbReference type="ChEBI" id="CHEBI:29105"/>
    </ligand>
</feature>
<feature type="binding site" evidence="2">
    <location>
        <position position="43"/>
    </location>
    <ligand>
        <name>Zn(2+)</name>
        <dbReference type="ChEBI" id="CHEBI:29105"/>
    </ligand>
</feature>
<feature type="binding site" evidence="2">
    <location>
        <position position="46"/>
    </location>
    <ligand>
        <name>Zn(2+)</name>
        <dbReference type="ChEBI" id="CHEBI:29105"/>
    </ligand>
</feature>
<feature type="binding site" evidence="1">
    <location>
        <begin position="136"/>
        <end position="143"/>
    </location>
    <ligand>
        <name>ATP</name>
        <dbReference type="ChEBI" id="CHEBI:30616"/>
    </ligand>
</feature>
<comment type="function">
    <text evidence="1">ATP-dependent specificity component of the Clp protease. It directs the protease to specific substrates. Can perform chaperone functions in the absence of ClpP.</text>
</comment>
<comment type="subunit">
    <text evidence="1">Component of the ClpX-ClpP complex. Forms a hexameric ring that, in the presence of ATP, binds to fourteen ClpP subunits assembled into a disk-like structure with a central cavity, resembling the structure of eukaryotic proteasomes.</text>
</comment>
<comment type="similarity">
    <text evidence="1">Belongs to the ClpX chaperone family.</text>
</comment>
<organism>
    <name type="scientific">Chlorobium phaeobacteroides (strain DSM 266 / SMG 266 / 2430)</name>
    <dbReference type="NCBI Taxonomy" id="290317"/>
    <lineage>
        <taxon>Bacteria</taxon>
        <taxon>Pseudomonadati</taxon>
        <taxon>Chlorobiota</taxon>
        <taxon>Chlorobiia</taxon>
        <taxon>Chlorobiales</taxon>
        <taxon>Chlorobiaceae</taxon>
        <taxon>Chlorobium/Pelodictyon group</taxon>
        <taxon>Chlorobium</taxon>
    </lineage>
</organism>
<name>CLPX_CHLPD</name>
<reference key="1">
    <citation type="submission" date="2006-12" db="EMBL/GenBank/DDBJ databases">
        <title>Complete sequence of Chlorobium phaeobacteroides DSM 266.</title>
        <authorList>
            <consortium name="US DOE Joint Genome Institute"/>
            <person name="Copeland A."/>
            <person name="Lucas S."/>
            <person name="Lapidus A."/>
            <person name="Barry K."/>
            <person name="Detter J.C."/>
            <person name="Glavina del Rio T."/>
            <person name="Hammon N."/>
            <person name="Israni S."/>
            <person name="Pitluck S."/>
            <person name="Goltsman E."/>
            <person name="Schmutz J."/>
            <person name="Larimer F."/>
            <person name="Land M."/>
            <person name="Hauser L."/>
            <person name="Mikhailova N."/>
            <person name="Li T."/>
            <person name="Overmann J."/>
            <person name="Bryant D.A."/>
            <person name="Richardson P."/>
        </authorList>
    </citation>
    <scope>NUCLEOTIDE SEQUENCE [LARGE SCALE GENOMIC DNA]</scope>
    <source>
        <strain>DSM 266 / SMG 266 / 2430</strain>
    </source>
</reference>